<reference key="1">
    <citation type="submission" date="2006-03" db="EMBL/GenBank/DDBJ databases">
        <title>Complete sequence of Shewanella denitrificans OS217.</title>
        <authorList>
            <consortium name="US DOE Joint Genome Institute"/>
            <person name="Copeland A."/>
            <person name="Lucas S."/>
            <person name="Lapidus A."/>
            <person name="Barry K."/>
            <person name="Detter J.C."/>
            <person name="Glavina del Rio T."/>
            <person name="Hammon N."/>
            <person name="Israni S."/>
            <person name="Dalin E."/>
            <person name="Tice H."/>
            <person name="Pitluck S."/>
            <person name="Brettin T."/>
            <person name="Bruce D."/>
            <person name="Han C."/>
            <person name="Tapia R."/>
            <person name="Gilna P."/>
            <person name="Kiss H."/>
            <person name="Schmutz J."/>
            <person name="Larimer F."/>
            <person name="Land M."/>
            <person name="Hauser L."/>
            <person name="Kyrpides N."/>
            <person name="Lykidis A."/>
            <person name="Richardson P."/>
        </authorList>
    </citation>
    <scope>NUCLEOTIDE SEQUENCE [LARGE SCALE GENOMIC DNA]</scope>
    <source>
        <strain>OS217 / ATCC BAA-1090 / DSM 15013</strain>
    </source>
</reference>
<proteinExistence type="inferred from homology"/>
<sequence length="91" mass="10741">MARNVNCVYLNKEAPGLDFQLYPGDLGKRIFDNISKEAWGLWQQKQTMLINEKKLNMMNLEDRQFLEQQMINFLFEGKQVEIEGYVPPVED</sequence>
<dbReference type="EMBL" id="CP000302">
    <property type="protein sequence ID" value="ABE55978.1"/>
    <property type="molecule type" value="Genomic_DNA"/>
</dbReference>
<dbReference type="RefSeq" id="WP_011497129.1">
    <property type="nucleotide sequence ID" value="NC_007954.1"/>
</dbReference>
<dbReference type="SMR" id="Q12KP8"/>
<dbReference type="STRING" id="318161.Sden_2699"/>
<dbReference type="KEGG" id="sdn:Sden_2699"/>
<dbReference type="eggNOG" id="COG2924">
    <property type="taxonomic scope" value="Bacteria"/>
</dbReference>
<dbReference type="HOGENOM" id="CLU_170994_0_0_6"/>
<dbReference type="OrthoDB" id="9804318at2"/>
<dbReference type="Proteomes" id="UP000001982">
    <property type="component" value="Chromosome"/>
</dbReference>
<dbReference type="GO" id="GO:0005829">
    <property type="term" value="C:cytosol"/>
    <property type="evidence" value="ECO:0007669"/>
    <property type="project" value="TreeGrafter"/>
</dbReference>
<dbReference type="GO" id="GO:0005506">
    <property type="term" value="F:iron ion binding"/>
    <property type="evidence" value="ECO:0007669"/>
    <property type="project" value="UniProtKB-UniRule"/>
</dbReference>
<dbReference type="GO" id="GO:0034599">
    <property type="term" value="P:cellular response to oxidative stress"/>
    <property type="evidence" value="ECO:0007669"/>
    <property type="project" value="TreeGrafter"/>
</dbReference>
<dbReference type="FunFam" id="1.10.3880.10:FF:000001">
    <property type="entry name" value="Probable Fe(2+)-trafficking protein"/>
    <property type="match status" value="1"/>
</dbReference>
<dbReference type="Gene3D" id="1.10.3880.10">
    <property type="entry name" value="Fe(II) trafficking protein YggX"/>
    <property type="match status" value="1"/>
</dbReference>
<dbReference type="HAMAP" id="MF_00686">
    <property type="entry name" value="Fe_traffic_YggX"/>
    <property type="match status" value="1"/>
</dbReference>
<dbReference type="InterPro" id="IPR007457">
    <property type="entry name" value="Fe_traffick_prot_YggX"/>
</dbReference>
<dbReference type="InterPro" id="IPR036766">
    <property type="entry name" value="Fe_traffick_prot_YggX_sf"/>
</dbReference>
<dbReference type="NCBIfam" id="NF003817">
    <property type="entry name" value="PRK05408.1"/>
    <property type="match status" value="1"/>
</dbReference>
<dbReference type="PANTHER" id="PTHR36965">
    <property type="entry name" value="FE(2+)-TRAFFICKING PROTEIN-RELATED"/>
    <property type="match status" value="1"/>
</dbReference>
<dbReference type="PANTHER" id="PTHR36965:SF1">
    <property type="entry name" value="FE(2+)-TRAFFICKING PROTEIN-RELATED"/>
    <property type="match status" value="1"/>
</dbReference>
<dbReference type="Pfam" id="PF04362">
    <property type="entry name" value="Iron_traffic"/>
    <property type="match status" value="1"/>
</dbReference>
<dbReference type="PIRSF" id="PIRSF029827">
    <property type="entry name" value="Fe_traffic_YggX"/>
    <property type="match status" value="1"/>
</dbReference>
<dbReference type="SUPFAM" id="SSF111148">
    <property type="entry name" value="YggX-like"/>
    <property type="match status" value="1"/>
</dbReference>
<feature type="chain" id="PRO_1000045063" description="Probable Fe(2+)-trafficking protein">
    <location>
        <begin position="1"/>
        <end position="91"/>
    </location>
</feature>
<protein>
    <recommendedName>
        <fullName evidence="1">Probable Fe(2+)-trafficking protein</fullName>
    </recommendedName>
</protein>
<gene>
    <name type="ordered locus">Sden_2699</name>
</gene>
<organism>
    <name type="scientific">Shewanella denitrificans (strain OS217 / ATCC BAA-1090 / DSM 15013)</name>
    <dbReference type="NCBI Taxonomy" id="318161"/>
    <lineage>
        <taxon>Bacteria</taxon>
        <taxon>Pseudomonadati</taxon>
        <taxon>Pseudomonadota</taxon>
        <taxon>Gammaproteobacteria</taxon>
        <taxon>Alteromonadales</taxon>
        <taxon>Shewanellaceae</taxon>
        <taxon>Shewanella</taxon>
    </lineage>
</organism>
<keyword id="KW-0408">Iron</keyword>
<keyword id="KW-1185">Reference proteome</keyword>
<name>FETP_SHEDO</name>
<comment type="function">
    <text evidence="1">Could be a mediator in iron transactions between iron acquisition and iron-requiring processes, such as synthesis and/or repair of Fe-S clusters in biosynthetic enzymes.</text>
</comment>
<comment type="similarity">
    <text evidence="1">Belongs to the Fe(2+)-trafficking protein family.</text>
</comment>
<accession>Q12KP8</accession>
<evidence type="ECO:0000255" key="1">
    <source>
        <dbReference type="HAMAP-Rule" id="MF_00686"/>
    </source>
</evidence>